<proteinExistence type="inferred from homology"/>
<dbReference type="EMBL" id="AL590842">
    <property type="protein sequence ID" value="CAL19225.1"/>
    <property type="molecule type" value="Genomic_DNA"/>
</dbReference>
<dbReference type="EMBL" id="AE009952">
    <property type="protein sequence ID" value="AAM87183.1"/>
    <property type="molecule type" value="Genomic_DNA"/>
</dbReference>
<dbReference type="EMBL" id="AE017042">
    <property type="protein sequence ID" value="AAS63786.1"/>
    <property type="molecule type" value="Genomic_DNA"/>
</dbReference>
<dbReference type="PIR" id="AG0067">
    <property type="entry name" value="AG0067"/>
</dbReference>
<dbReference type="RefSeq" id="WP_002210443.1">
    <property type="nucleotide sequence ID" value="NZ_WUCM01000081.1"/>
</dbReference>
<dbReference type="RefSeq" id="YP_002345617.1">
    <property type="nucleotide sequence ID" value="NC_003143.1"/>
</dbReference>
<dbReference type="SMR" id="Q8ZIF8"/>
<dbReference type="STRING" id="214092.YPO0546"/>
<dbReference type="PaxDb" id="214092-YPO0546"/>
<dbReference type="DNASU" id="1148582"/>
<dbReference type="EnsemblBacteria" id="AAS63786">
    <property type="protein sequence ID" value="AAS63786"/>
    <property type="gene ID" value="YP_3638"/>
</dbReference>
<dbReference type="GeneID" id="57974069"/>
<dbReference type="KEGG" id="ype:YPO0546"/>
<dbReference type="KEGG" id="ypk:y3635"/>
<dbReference type="KEGG" id="ypm:YP_3638"/>
<dbReference type="PATRIC" id="fig|214092.21.peg.799"/>
<dbReference type="eggNOG" id="COG2001">
    <property type="taxonomic scope" value="Bacteria"/>
</dbReference>
<dbReference type="HOGENOM" id="CLU_107907_2_0_6"/>
<dbReference type="OMA" id="ECELDGN"/>
<dbReference type="OrthoDB" id="9807753at2"/>
<dbReference type="Proteomes" id="UP000000815">
    <property type="component" value="Chromosome"/>
</dbReference>
<dbReference type="Proteomes" id="UP000001019">
    <property type="component" value="Chromosome"/>
</dbReference>
<dbReference type="Proteomes" id="UP000002490">
    <property type="component" value="Chromosome"/>
</dbReference>
<dbReference type="GO" id="GO:0005737">
    <property type="term" value="C:cytoplasm"/>
    <property type="evidence" value="ECO:0007669"/>
    <property type="project" value="UniProtKB-UniRule"/>
</dbReference>
<dbReference type="GO" id="GO:0009295">
    <property type="term" value="C:nucleoid"/>
    <property type="evidence" value="ECO:0007669"/>
    <property type="project" value="UniProtKB-SubCell"/>
</dbReference>
<dbReference type="GO" id="GO:0003700">
    <property type="term" value="F:DNA-binding transcription factor activity"/>
    <property type="evidence" value="ECO:0000318"/>
    <property type="project" value="GO_Central"/>
</dbReference>
<dbReference type="GO" id="GO:0000976">
    <property type="term" value="F:transcription cis-regulatory region binding"/>
    <property type="evidence" value="ECO:0000318"/>
    <property type="project" value="GO_Central"/>
</dbReference>
<dbReference type="GO" id="GO:2000143">
    <property type="term" value="P:negative regulation of DNA-templated transcription initiation"/>
    <property type="evidence" value="ECO:0000318"/>
    <property type="project" value="GO_Central"/>
</dbReference>
<dbReference type="CDD" id="cd16321">
    <property type="entry name" value="MraZ_C"/>
    <property type="match status" value="1"/>
</dbReference>
<dbReference type="CDD" id="cd16320">
    <property type="entry name" value="MraZ_N"/>
    <property type="match status" value="1"/>
</dbReference>
<dbReference type="FunFam" id="3.40.1550.20:FF:000001">
    <property type="entry name" value="Transcriptional regulator MraZ"/>
    <property type="match status" value="1"/>
</dbReference>
<dbReference type="Gene3D" id="3.40.1550.20">
    <property type="entry name" value="Transcriptional regulator MraZ domain"/>
    <property type="match status" value="1"/>
</dbReference>
<dbReference type="HAMAP" id="MF_01008">
    <property type="entry name" value="MraZ"/>
    <property type="match status" value="1"/>
</dbReference>
<dbReference type="InterPro" id="IPR003444">
    <property type="entry name" value="MraZ"/>
</dbReference>
<dbReference type="InterPro" id="IPR035644">
    <property type="entry name" value="MraZ_C"/>
</dbReference>
<dbReference type="InterPro" id="IPR020603">
    <property type="entry name" value="MraZ_dom"/>
</dbReference>
<dbReference type="InterPro" id="IPR035642">
    <property type="entry name" value="MraZ_N"/>
</dbReference>
<dbReference type="InterPro" id="IPR038619">
    <property type="entry name" value="MraZ_sf"/>
</dbReference>
<dbReference type="InterPro" id="IPR007159">
    <property type="entry name" value="SpoVT-AbrB_dom"/>
</dbReference>
<dbReference type="InterPro" id="IPR037914">
    <property type="entry name" value="SpoVT-AbrB_sf"/>
</dbReference>
<dbReference type="NCBIfam" id="TIGR00242">
    <property type="entry name" value="division/cell wall cluster transcriptional repressor MraZ"/>
    <property type="match status" value="1"/>
</dbReference>
<dbReference type="PANTHER" id="PTHR34701">
    <property type="entry name" value="TRANSCRIPTIONAL REGULATOR MRAZ"/>
    <property type="match status" value="1"/>
</dbReference>
<dbReference type="PANTHER" id="PTHR34701:SF1">
    <property type="entry name" value="TRANSCRIPTIONAL REGULATOR MRAZ"/>
    <property type="match status" value="1"/>
</dbReference>
<dbReference type="Pfam" id="PF02381">
    <property type="entry name" value="MraZ"/>
    <property type="match status" value="2"/>
</dbReference>
<dbReference type="SUPFAM" id="SSF89447">
    <property type="entry name" value="AbrB/MazE/MraZ-like"/>
    <property type="match status" value="1"/>
</dbReference>
<dbReference type="PROSITE" id="PS51740">
    <property type="entry name" value="SPOVT_ABRB"/>
    <property type="match status" value="2"/>
</dbReference>
<protein>
    <recommendedName>
        <fullName>Transcriptional regulator MraZ</fullName>
    </recommendedName>
</protein>
<comment type="function">
    <text evidence="1">Negatively regulates its own expression and that of the subsequent genes in the proximal part of the division and cell wall (dcw) gene cluster. Acts by binding directly to DNA. May also regulate the expression of genes outside the dcw cluster.</text>
</comment>
<comment type="subunit">
    <text evidence="1">Forms oligomers.</text>
</comment>
<comment type="subcellular location">
    <subcellularLocation>
        <location evidence="1">Cytoplasm</location>
        <location evidence="1">Nucleoid</location>
    </subcellularLocation>
</comment>
<comment type="similarity">
    <text evidence="1">Belongs to the MraZ family.</text>
</comment>
<organism>
    <name type="scientific">Yersinia pestis</name>
    <dbReference type="NCBI Taxonomy" id="632"/>
    <lineage>
        <taxon>Bacteria</taxon>
        <taxon>Pseudomonadati</taxon>
        <taxon>Pseudomonadota</taxon>
        <taxon>Gammaproteobacteria</taxon>
        <taxon>Enterobacterales</taxon>
        <taxon>Yersiniaceae</taxon>
        <taxon>Yersinia</taxon>
    </lineage>
</organism>
<gene>
    <name evidence="1" type="primary">mraZ</name>
    <name type="ordered locus">YPO0546</name>
    <name type="ordered locus">y3635</name>
    <name type="ordered locus">YP_3638</name>
</gene>
<reference key="1">
    <citation type="journal article" date="2001" name="Nature">
        <title>Genome sequence of Yersinia pestis, the causative agent of plague.</title>
        <authorList>
            <person name="Parkhill J."/>
            <person name="Wren B.W."/>
            <person name="Thomson N.R."/>
            <person name="Titball R.W."/>
            <person name="Holden M.T.G."/>
            <person name="Prentice M.B."/>
            <person name="Sebaihia M."/>
            <person name="James K.D."/>
            <person name="Churcher C.M."/>
            <person name="Mungall K.L."/>
            <person name="Baker S."/>
            <person name="Basham D."/>
            <person name="Bentley S.D."/>
            <person name="Brooks K."/>
            <person name="Cerdeno-Tarraga A.-M."/>
            <person name="Chillingworth T."/>
            <person name="Cronin A."/>
            <person name="Davies R.M."/>
            <person name="Davis P."/>
            <person name="Dougan G."/>
            <person name="Feltwell T."/>
            <person name="Hamlin N."/>
            <person name="Holroyd S."/>
            <person name="Jagels K."/>
            <person name="Karlyshev A.V."/>
            <person name="Leather S."/>
            <person name="Moule S."/>
            <person name="Oyston P.C.F."/>
            <person name="Quail M.A."/>
            <person name="Rutherford K.M."/>
            <person name="Simmonds M."/>
            <person name="Skelton J."/>
            <person name="Stevens K."/>
            <person name="Whitehead S."/>
            <person name="Barrell B.G."/>
        </authorList>
    </citation>
    <scope>NUCLEOTIDE SEQUENCE [LARGE SCALE GENOMIC DNA]</scope>
    <source>
        <strain>CO-92 / Biovar Orientalis</strain>
    </source>
</reference>
<reference key="2">
    <citation type="journal article" date="2002" name="J. Bacteriol.">
        <title>Genome sequence of Yersinia pestis KIM.</title>
        <authorList>
            <person name="Deng W."/>
            <person name="Burland V."/>
            <person name="Plunkett G. III"/>
            <person name="Boutin A."/>
            <person name="Mayhew G.F."/>
            <person name="Liss P."/>
            <person name="Perna N.T."/>
            <person name="Rose D.J."/>
            <person name="Mau B."/>
            <person name="Zhou S."/>
            <person name="Schwartz D.C."/>
            <person name="Fetherston J.D."/>
            <person name="Lindler L.E."/>
            <person name="Brubaker R.R."/>
            <person name="Plano G.V."/>
            <person name="Straley S.C."/>
            <person name="McDonough K.A."/>
            <person name="Nilles M.L."/>
            <person name="Matson J.S."/>
            <person name="Blattner F.R."/>
            <person name="Perry R.D."/>
        </authorList>
    </citation>
    <scope>NUCLEOTIDE SEQUENCE [LARGE SCALE GENOMIC DNA]</scope>
    <source>
        <strain>KIM10+ / Biovar Mediaevalis</strain>
    </source>
</reference>
<reference key="3">
    <citation type="journal article" date="2004" name="DNA Res.">
        <title>Complete genome sequence of Yersinia pestis strain 91001, an isolate avirulent to humans.</title>
        <authorList>
            <person name="Song Y."/>
            <person name="Tong Z."/>
            <person name="Wang J."/>
            <person name="Wang L."/>
            <person name="Guo Z."/>
            <person name="Han Y."/>
            <person name="Zhang J."/>
            <person name="Pei D."/>
            <person name="Zhou D."/>
            <person name="Qin H."/>
            <person name="Pang X."/>
            <person name="Han Y."/>
            <person name="Zhai J."/>
            <person name="Li M."/>
            <person name="Cui B."/>
            <person name="Qi Z."/>
            <person name="Jin L."/>
            <person name="Dai R."/>
            <person name="Chen F."/>
            <person name="Li S."/>
            <person name="Ye C."/>
            <person name="Du Z."/>
            <person name="Lin W."/>
            <person name="Wang J."/>
            <person name="Yu J."/>
            <person name="Yang H."/>
            <person name="Wang J."/>
            <person name="Huang P."/>
            <person name="Yang R."/>
        </authorList>
    </citation>
    <scope>NUCLEOTIDE SEQUENCE [LARGE SCALE GENOMIC DNA]</scope>
    <source>
        <strain>91001 / Biovar Mediaevalis</strain>
    </source>
</reference>
<sequence>MFRGATMVNLDSKGRLAVPTRYRESLNEESQGQMVCTIDLHQPCLLLYPLPEWEIIEQKLSRLSSMNPAERRVQRLLLGHASECQMDGAGRLLIAGTLRQHAGLNKEVMLVGQFNKFELWDEQTWYQQVKDDIDAEQSTQEPLSERLQGLSL</sequence>
<feature type="chain" id="PRO_0000108561" description="Transcriptional regulator MraZ">
    <location>
        <begin position="1"/>
        <end position="152"/>
    </location>
</feature>
<feature type="domain" description="SpoVT-AbrB 1" evidence="2">
    <location>
        <begin position="5"/>
        <end position="52"/>
    </location>
</feature>
<feature type="domain" description="SpoVT-AbrB 2" evidence="2">
    <location>
        <begin position="81"/>
        <end position="124"/>
    </location>
</feature>
<name>MRAZ_YERPE</name>
<evidence type="ECO:0000255" key="1">
    <source>
        <dbReference type="HAMAP-Rule" id="MF_01008"/>
    </source>
</evidence>
<evidence type="ECO:0000255" key="2">
    <source>
        <dbReference type="PROSITE-ProRule" id="PRU01076"/>
    </source>
</evidence>
<keyword id="KW-0963">Cytoplasm</keyword>
<keyword id="KW-0238">DNA-binding</keyword>
<keyword id="KW-1185">Reference proteome</keyword>
<keyword id="KW-0677">Repeat</keyword>
<keyword id="KW-0678">Repressor</keyword>
<keyword id="KW-0804">Transcription</keyword>
<keyword id="KW-0805">Transcription regulation</keyword>
<accession>Q8ZIF8</accession>
<accession>Q0WJC1</accession>